<gene>
    <name type="primary">NDUFS5</name>
    <name type="ORF">QtsA-15861</name>
</gene>
<evidence type="ECO:0000250" key="1">
    <source>
        <dbReference type="UniProtKB" id="O43920"/>
    </source>
</evidence>
<evidence type="ECO:0000255" key="2">
    <source>
        <dbReference type="PROSITE-ProRule" id="PRU01150"/>
    </source>
</evidence>
<evidence type="ECO:0000256" key="3">
    <source>
        <dbReference type="SAM" id="MobiDB-lite"/>
    </source>
</evidence>
<evidence type="ECO:0000305" key="4"/>
<reference key="1">
    <citation type="submission" date="2005-06" db="EMBL/GenBank/DDBJ databases">
        <title>DNA sequences of macaque genes expressed in brain or testis and its evolutionary implications.</title>
        <authorList>
            <consortium name="International consortium for macaque cDNA sequencing and analysis"/>
        </authorList>
    </citation>
    <scope>NUCLEOTIDE SEQUENCE [LARGE SCALE MRNA]</scope>
    <source>
        <tissue>Testis</tissue>
    </source>
</reference>
<feature type="chain" id="PRO_0000251865" description="NADH dehydrogenase [ubiquinone] iron-sulfur protein 5">
    <location>
        <begin position="1"/>
        <end position="106"/>
    </location>
</feature>
<feature type="domain" description="CHCH" evidence="2">
    <location>
        <begin position="30"/>
        <end position="74"/>
    </location>
</feature>
<feature type="region of interest" description="Disordered" evidence="3">
    <location>
        <begin position="87"/>
        <end position="106"/>
    </location>
</feature>
<feature type="short sequence motif" description="Cx9C motif 1" evidence="2">
    <location>
        <begin position="33"/>
        <end position="43"/>
    </location>
</feature>
<feature type="short sequence motif" description="Cx9C motif 2" evidence="2">
    <location>
        <begin position="56"/>
        <end position="66"/>
    </location>
</feature>
<feature type="disulfide bond" evidence="2">
    <location>
        <begin position="33"/>
        <end position="66"/>
    </location>
</feature>
<feature type="disulfide bond" evidence="2">
    <location>
        <begin position="43"/>
        <end position="56"/>
    </location>
</feature>
<comment type="function">
    <text evidence="1">Accessory subunit of the mitochondrial membrane respiratory chain NADH dehydrogenase (Complex I), that is believed not to be involved in catalysis. Complex I functions in the transfer of electrons from NADH to the respiratory chain. The immediate electron acceptor for the enzyme is believed to be ubiquinone.</text>
</comment>
<comment type="subunit">
    <text evidence="1">Mammalian complex I is composed of 45 different subunits. This is a component of the iron-sulfur (IP) fragment of the enzyme.</text>
</comment>
<comment type="subcellular location">
    <subcellularLocation>
        <location evidence="1">Mitochondrion inner membrane</location>
        <topology evidence="1">Peripheral membrane protein</topology>
    </subcellularLocation>
    <subcellularLocation>
        <location evidence="1">Mitochondrion intermembrane space</location>
    </subcellularLocation>
</comment>
<comment type="domain">
    <text evidence="1">Contains two C-X9-C motifs that are predicted to form a helix-coil-helix structure, permitting the formation of intramolecular disulfide bonds.</text>
</comment>
<comment type="similarity">
    <text evidence="4">Belongs to the complex I NDUFS5 subunit family.</text>
</comment>
<keyword id="KW-1015">Disulfide bond</keyword>
<keyword id="KW-0249">Electron transport</keyword>
<keyword id="KW-0472">Membrane</keyword>
<keyword id="KW-0496">Mitochondrion</keyword>
<keyword id="KW-0999">Mitochondrion inner membrane</keyword>
<keyword id="KW-1185">Reference proteome</keyword>
<keyword id="KW-0679">Respiratory chain</keyword>
<keyword id="KW-0813">Transport</keyword>
<proteinExistence type="inferred from homology"/>
<organism>
    <name type="scientific">Macaca fascicularis</name>
    <name type="common">Crab-eating macaque</name>
    <name type="synonym">Cynomolgus monkey</name>
    <dbReference type="NCBI Taxonomy" id="9541"/>
    <lineage>
        <taxon>Eukaryota</taxon>
        <taxon>Metazoa</taxon>
        <taxon>Chordata</taxon>
        <taxon>Craniata</taxon>
        <taxon>Vertebrata</taxon>
        <taxon>Euteleostomi</taxon>
        <taxon>Mammalia</taxon>
        <taxon>Eutheria</taxon>
        <taxon>Euarchontoglires</taxon>
        <taxon>Primates</taxon>
        <taxon>Haplorrhini</taxon>
        <taxon>Catarrhini</taxon>
        <taxon>Cercopithecidae</taxon>
        <taxon>Cercopithecinae</taxon>
        <taxon>Macaca</taxon>
    </lineage>
</organism>
<accession>Q4R3M6</accession>
<name>NDUS5_MACFA</name>
<protein>
    <recommendedName>
        <fullName>NADH dehydrogenase [ubiquinone] iron-sulfur protein 5</fullName>
    </recommendedName>
    <alternativeName>
        <fullName>Complex I-15 kDa</fullName>
        <shortName>CI-15 kDa</shortName>
    </alternativeName>
    <alternativeName>
        <fullName>NADH-ubiquinone oxidoreductase 15 kDa subunit</fullName>
    </alternativeName>
</protein>
<dbReference type="EMBL" id="AB179240">
    <property type="protein sequence ID" value="BAE02291.1"/>
    <property type="molecule type" value="mRNA"/>
</dbReference>
<dbReference type="RefSeq" id="NP_001271006.1">
    <property type="nucleotide sequence ID" value="NM_001284077.1"/>
</dbReference>
<dbReference type="RefSeq" id="XP_045229864.1">
    <property type="nucleotide sequence ID" value="XM_045373929.2"/>
</dbReference>
<dbReference type="RefSeq" id="XP_045229871.1">
    <property type="nucleotide sequence ID" value="XM_045373936.2"/>
</dbReference>
<dbReference type="RefSeq" id="XP_045229876.1">
    <property type="nucleotide sequence ID" value="XM_045373941.2"/>
</dbReference>
<dbReference type="SMR" id="Q4R3M6"/>
<dbReference type="STRING" id="9541.ENSMFAP00000013031"/>
<dbReference type="GeneID" id="101867140"/>
<dbReference type="VEuPathDB" id="HostDB:ENSMFAG00000027526"/>
<dbReference type="eggNOG" id="KOG4110">
    <property type="taxonomic scope" value="Eukaryota"/>
</dbReference>
<dbReference type="OMA" id="RQQRDKM"/>
<dbReference type="Proteomes" id="UP000233100">
    <property type="component" value="Chromosome 1"/>
</dbReference>
<dbReference type="GO" id="GO:0005743">
    <property type="term" value="C:mitochondrial inner membrane"/>
    <property type="evidence" value="ECO:0007669"/>
    <property type="project" value="UniProtKB-SubCell"/>
</dbReference>
<dbReference type="GO" id="GO:0005758">
    <property type="term" value="C:mitochondrial intermembrane space"/>
    <property type="evidence" value="ECO:0007669"/>
    <property type="project" value="UniProtKB-SubCell"/>
</dbReference>
<dbReference type="GO" id="GO:0005739">
    <property type="term" value="C:mitochondrion"/>
    <property type="evidence" value="ECO:0000250"/>
    <property type="project" value="UniProtKB"/>
</dbReference>
<dbReference type="GO" id="GO:0045271">
    <property type="term" value="C:respiratory chain complex I"/>
    <property type="evidence" value="ECO:0000250"/>
    <property type="project" value="UniProtKB"/>
</dbReference>
<dbReference type="GO" id="GO:0032981">
    <property type="term" value="P:mitochondrial respiratory chain complex I assembly"/>
    <property type="evidence" value="ECO:0000250"/>
    <property type="project" value="UniProtKB"/>
</dbReference>
<dbReference type="CDD" id="cd24141">
    <property type="entry name" value="NDUFS5-like"/>
    <property type="match status" value="1"/>
</dbReference>
<dbReference type="InterPro" id="IPR019342">
    <property type="entry name" value="NADH_UbQ_OxRdtase_FeS-su5"/>
</dbReference>
<dbReference type="PANTHER" id="PTHR15224">
    <property type="entry name" value="NADH DEHYDROGENASE [UBIQUINONE] IRON-SULFUR PROTEIN 5"/>
    <property type="match status" value="1"/>
</dbReference>
<dbReference type="PANTHER" id="PTHR15224:SF1">
    <property type="entry name" value="NADH DEHYDROGENASE [UBIQUINONE] IRON-SULFUR PROTEIN 5"/>
    <property type="match status" value="1"/>
</dbReference>
<dbReference type="Pfam" id="PF10200">
    <property type="entry name" value="Ndufs5"/>
    <property type="match status" value="1"/>
</dbReference>
<dbReference type="PROSITE" id="PS51808">
    <property type="entry name" value="CHCH"/>
    <property type="match status" value="1"/>
</dbReference>
<sequence length="106" mass="12644">MPFLDIQKRFGLNIDRWWTIQSAEQPYKLAPRCHAFEKEWIECAHGIGAIRAEKECKIEYDDFIECLLRQKTMRRVNAIRRQRDKLIKEGKYTPPPHHIGKGEPRP</sequence>